<name>GUAA_BURA4</name>
<reference key="1">
    <citation type="submission" date="2008-04" db="EMBL/GenBank/DDBJ databases">
        <title>Complete sequence of chromosome 1 of Burkholderia ambifaria MC40-6.</title>
        <authorList>
            <person name="Copeland A."/>
            <person name="Lucas S."/>
            <person name="Lapidus A."/>
            <person name="Glavina del Rio T."/>
            <person name="Dalin E."/>
            <person name="Tice H."/>
            <person name="Pitluck S."/>
            <person name="Chain P."/>
            <person name="Malfatti S."/>
            <person name="Shin M."/>
            <person name="Vergez L."/>
            <person name="Lang D."/>
            <person name="Schmutz J."/>
            <person name="Larimer F."/>
            <person name="Land M."/>
            <person name="Hauser L."/>
            <person name="Kyrpides N."/>
            <person name="Lykidis A."/>
            <person name="Ramette A."/>
            <person name="Konstantinidis K."/>
            <person name="Tiedje J."/>
            <person name="Richardson P."/>
        </authorList>
    </citation>
    <scope>NUCLEOTIDE SEQUENCE [LARGE SCALE GENOMIC DNA]</scope>
    <source>
        <strain>MC40-6</strain>
    </source>
</reference>
<gene>
    <name evidence="1" type="primary">guaA</name>
    <name type="ordered locus">BamMC406_1891</name>
</gene>
<feature type="chain" id="PRO_1000120229" description="GMP synthase [glutamine-hydrolyzing]">
    <location>
        <begin position="1"/>
        <end position="539"/>
    </location>
</feature>
<feature type="domain" description="Glutamine amidotransferase type-1" evidence="1">
    <location>
        <begin position="4"/>
        <end position="202"/>
    </location>
</feature>
<feature type="domain" description="GMPS ATP-PPase" evidence="1">
    <location>
        <begin position="203"/>
        <end position="395"/>
    </location>
</feature>
<feature type="active site" description="Nucleophile" evidence="1">
    <location>
        <position position="81"/>
    </location>
</feature>
<feature type="active site" evidence="1">
    <location>
        <position position="176"/>
    </location>
</feature>
<feature type="active site" evidence="1">
    <location>
        <position position="178"/>
    </location>
</feature>
<feature type="binding site" evidence="1">
    <location>
        <begin position="230"/>
        <end position="236"/>
    </location>
    <ligand>
        <name>ATP</name>
        <dbReference type="ChEBI" id="CHEBI:30616"/>
    </ligand>
</feature>
<sequence>MHDKILILDFGSQVTQLIARRVREAHVYCEIHPNDVSDEFVREFAPKAVILSGSHASTYEDHQLRAPQAVWDLGVPVLGICYGMQTMAVQLGGKVEWSDHREFGYAEMRAHGHTRLLDGIEDFTTAEGHGMLKVWMSHGDKVAELPPGFALMASTPSCPIAGMADEARGYYAVQFHPEVTHTVKGRQIIERFVLQIAGAKPDWIMSNHIEEAVAKIREQVGDEEVILGLSGGVDSSVAAALIHRAIGDQLTCVFVDHGLLRLNEGKMVLDMFEGRLHAKVVHVDASEQFLGHLTGVTDPEAKRKIIGREFVEVFQAEAKKLSKAKWLAQGTIYPDVVESGGTKTKKATTIKSHHNVGGLPETLGLKLLEPLRDLFKDEVRELGVALGLPPEMVYRHPFPGPGLGVRILGEVKREYADLLRRADAIFIEELRGTTATTQDAAAGLCGEADVGKTWYDLTSQAFAVFLPVKSVGVMGDGRTYDYVTSLRAVQTTDFMTAHWAHLPYALLGRASNRIINEVRGINRVVYDISGKPPATIEWE</sequence>
<organism>
    <name type="scientific">Burkholderia ambifaria (strain MC40-6)</name>
    <dbReference type="NCBI Taxonomy" id="398577"/>
    <lineage>
        <taxon>Bacteria</taxon>
        <taxon>Pseudomonadati</taxon>
        <taxon>Pseudomonadota</taxon>
        <taxon>Betaproteobacteria</taxon>
        <taxon>Burkholderiales</taxon>
        <taxon>Burkholderiaceae</taxon>
        <taxon>Burkholderia</taxon>
        <taxon>Burkholderia cepacia complex</taxon>
    </lineage>
</organism>
<comment type="function">
    <text evidence="1">Catalyzes the synthesis of GMP from XMP.</text>
</comment>
<comment type="catalytic activity">
    <reaction evidence="1">
        <text>XMP + L-glutamine + ATP + H2O = GMP + L-glutamate + AMP + diphosphate + 2 H(+)</text>
        <dbReference type="Rhea" id="RHEA:11680"/>
        <dbReference type="ChEBI" id="CHEBI:15377"/>
        <dbReference type="ChEBI" id="CHEBI:15378"/>
        <dbReference type="ChEBI" id="CHEBI:29985"/>
        <dbReference type="ChEBI" id="CHEBI:30616"/>
        <dbReference type="ChEBI" id="CHEBI:33019"/>
        <dbReference type="ChEBI" id="CHEBI:57464"/>
        <dbReference type="ChEBI" id="CHEBI:58115"/>
        <dbReference type="ChEBI" id="CHEBI:58359"/>
        <dbReference type="ChEBI" id="CHEBI:456215"/>
        <dbReference type="EC" id="6.3.5.2"/>
    </reaction>
</comment>
<comment type="pathway">
    <text evidence="1">Purine metabolism; GMP biosynthesis; GMP from XMP (L-Gln route): step 1/1.</text>
</comment>
<comment type="subunit">
    <text evidence="1">Homodimer.</text>
</comment>
<keyword id="KW-0067">ATP-binding</keyword>
<keyword id="KW-0315">Glutamine amidotransferase</keyword>
<keyword id="KW-0332">GMP biosynthesis</keyword>
<keyword id="KW-0436">Ligase</keyword>
<keyword id="KW-0547">Nucleotide-binding</keyword>
<keyword id="KW-0658">Purine biosynthesis</keyword>
<dbReference type="EC" id="6.3.5.2" evidence="1"/>
<dbReference type="EMBL" id="CP001025">
    <property type="protein sequence ID" value="ACB64373.1"/>
    <property type="molecule type" value="Genomic_DNA"/>
</dbReference>
<dbReference type="RefSeq" id="WP_012364116.1">
    <property type="nucleotide sequence ID" value="NC_010551.1"/>
</dbReference>
<dbReference type="SMR" id="B1YS44"/>
<dbReference type="MEROPS" id="C26.957"/>
<dbReference type="KEGG" id="bac:BamMC406_1891"/>
<dbReference type="HOGENOM" id="CLU_014340_0_5_4"/>
<dbReference type="OrthoDB" id="9802219at2"/>
<dbReference type="UniPathway" id="UPA00189">
    <property type="reaction ID" value="UER00296"/>
</dbReference>
<dbReference type="Proteomes" id="UP000001680">
    <property type="component" value="Chromosome 1"/>
</dbReference>
<dbReference type="GO" id="GO:0005829">
    <property type="term" value="C:cytosol"/>
    <property type="evidence" value="ECO:0007669"/>
    <property type="project" value="TreeGrafter"/>
</dbReference>
<dbReference type="GO" id="GO:0005524">
    <property type="term" value="F:ATP binding"/>
    <property type="evidence" value="ECO:0007669"/>
    <property type="project" value="UniProtKB-UniRule"/>
</dbReference>
<dbReference type="GO" id="GO:0003921">
    <property type="term" value="F:GMP synthase activity"/>
    <property type="evidence" value="ECO:0007669"/>
    <property type="project" value="InterPro"/>
</dbReference>
<dbReference type="CDD" id="cd01742">
    <property type="entry name" value="GATase1_GMP_Synthase"/>
    <property type="match status" value="1"/>
</dbReference>
<dbReference type="CDD" id="cd01997">
    <property type="entry name" value="GMP_synthase_C"/>
    <property type="match status" value="1"/>
</dbReference>
<dbReference type="FunFam" id="3.30.300.10:FF:000002">
    <property type="entry name" value="GMP synthase [glutamine-hydrolyzing]"/>
    <property type="match status" value="1"/>
</dbReference>
<dbReference type="FunFam" id="3.40.50.620:FF:000001">
    <property type="entry name" value="GMP synthase [glutamine-hydrolyzing]"/>
    <property type="match status" value="1"/>
</dbReference>
<dbReference type="FunFam" id="3.40.50.880:FF:000001">
    <property type="entry name" value="GMP synthase [glutamine-hydrolyzing]"/>
    <property type="match status" value="1"/>
</dbReference>
<dbReference type="Gene3D" id="3.30.300.10">
    <property type="match status" value="1"/>
</dbReference>
<dbReference type="Gene3D" id="3.40.50.880">
    <property type="match status" value="1"/>
</dbReference>
<dbReference type="Gene3D" id="3.40.50.620">
    <property type="entry name" value="HUPs"/>
    <property type="match status" value="1"/>
</dbReference>
<dbReference type="HAMAP" id="MF_00344">
    <property type="entry name" value="GMP_synthase"/>
    <property type="match status" value="1"/>
</dbReference>
<dbReference type="InterPro" id="IPR029062">
    <property type="entry name" value="Class_I_gatase-like"/>
</dbReference>
<dbReference type="InterPro" id="IPR017926">
    <property type="entry name" value="GATASE"/>
</dbReference>
<dbReference type="InterPro" id="IPR001674">
    <property type="entry name" value="GMP_synth_C"/>
</dbReference>
<dbReference type="InterPro" id="IPR004739">
    <property type="entry name" value="GMP_synth_GATase"/>
</dbReference>
<dbReference type="InterPro" id="IPR022955">
    <property type="entry name" value="GMP_synthase"/>
</dbReference>
<dbReference type="InterPro" id="IPR025777">
    <property type="entry name" value="GMPS_ATP_PPase_dom"/>
</dbReference>
<dbReference type="InterPro" id="IPR022310">
    <property type="entry name" value="NAD/GMP_synthase"/>
</dbReference>
<dbReference type="InterPro" id="IPR014729">
    <property type="entry name" value="Rossmann-like_a/b/a_fold"/>
</dbReference>
<dbReference type="NCBIfam" id="TIGR00884">
    <property type="entry name" value="guaA_Cterm"/>
    <property type="match status" value="1"/>
</dbReference>
<dbReference type="NCBIfam" id="TIGR00888">
    <property type="entry name" value="guaA_Nterm"/>
    <property type="match status" value="1"/>
</dbReference>
<dbReference type="NCBIfam" id="NF000848">
    <property type="entry name" value="PRK00074.1"/>
    <property type="match status" value="1"/>
</dbReference>
<dbReference type="PANTHER" id="PTHR11922:SF2">
    <property type="entry name" value="GMP SYNTHASE [GLUTAMINE-HYDROLYZING]"/>
    <property type="match status" value="1"/>
</dbReference>
<dbReference type="PANTHER" id="PTHR11922">
    <property type="entry name" value="GMP SYNTHASE-RELATED"/>
    <property type="match status" value="1"/>
</dbReference>
<dbReference type="Pfam" id="PF00117">
    <property type="entry name" value="GATase"/>
    <property type="match status" value="1"/>
</dbReference>
<dbReference type="Pfam" id="PF00958">
    <property type="entry name" value="GMP_synt_C"/>
    <property type="match status" value="1"/>
</dbReference>
<dbReference type="Pfam" id="PF02540">
    <property type="entry name" value="NAD_synthase"/>
    <property type="match status" value="1"/>
</dbReference>
<dbReference type="SUPFAM" id="SSF52402">
    <property type="entry name" value="Adenine nucleotide alpha hydrolases-like"/>
    <property type="match status" value="1"/>
</dbReference>
<dbReference type="SUPFAM" id="SSF52317">
    <property type="entry name" value="Class I glutamine amidotransferase-like"/>
    <property type="match status" value="1"/>
</dbReference>
<dbReference type="SUPFAM" id="SSF54810">
    <property type="entry name" value="GMP synthetase C-terminal dimerisation domain"/>
    <property type="match status" value="1"/>
</dbReference>
<dbReference type="PROSITE" id="PS51273">
    <property type="entry name" value="GATASE_TYPE_1"/>
    <property type="match status" value="1"/>
</dbReference>
<dbReference type="PROSITE" id="PS51553">
    <property type="entry name" value="GMPS_ATP_PPASE"/>
    <property type="match status" value="1"/>
</dbReference>
<proteinExistence type="inferred from homology"/>
<evidence type="ECO:0000255" key="1">
    <source>
        <dbReference type="HAMAP-Rule" id="MF_00344"/>
    </source>
</evidence>
<accession>B1YS44</accession>
<protein>
    <recommendedName>
        <fullName evidence="1">GMP synthase [glutamine-hydrolyzing]</fullName>
        <ecNumber evidence="1">6.3.5.2</ecNumber>
    </recommendedName>
    <alternativeName>
        <fullName evidence="1">GMP synthetase</fullName>
    </alternativeName>
    <alternativeName>
        <fullName evidence="1">Glutamine amidotransferase</fullName>
    </alternativeName>
</protein>